<dbReference type="EMBL" id="AB028843">
    <property type="protein sequence ID" value="BAD88410.1"/>
    <property type="molecule type" value="mRNA"/>
</dbReference>
<dbReference type="EMBL" id="AF327407">
    <property type="protein sequence ID" value="AAN73032.1"/>
    <property type="molecule type" value="mRNA"/>
</dbReference>
<dbReference type="EMBL" id="AK051658">
    <property type="protein sequence ID" value="BAC34707.1"/>
    <property type="molecule type" value="mRNA"/>
</dbReference>
<dbReference type="EMBL" id="AK164177">
    <property type="protein sequence ID" value="BAE37664.1"/>
    <property type="molecule type" value="mRNA"/>
</dbReference>
<dbReference type="EMBL" id="BC023243">
    <property type="protein sequence ID" value="AAH23243.1"/>
    <property type="molecule type" value="mRNA"/>
</dbReference>
<dbReference type="EMBL" id="BC049916">
    <property type="protein sequence ID" value="AAH49916.1"/>
    <property type="molecule type" value="mRNA"/>
</dbReference>
<dbReference type="EMBL" id="BC119362">
    <property type="protein sequence ID" value="AAI19363.1"/>
    <property type="molecule type" value="mRNA"/>
</dbReference>
<dbReference type="EMBL" id="BC125299">
    <property type="protein sequence ID" value="AAI25300.1"/>
    <property type="molecule type" value="mRNA"/>
</dbReference>
<dbReference type="CCDS" id="CCDS26257.1"/>
<dbReference type="RefSeq" id="NP_742118.3">
    <property type="nucleotide sequence ID" value="NM_172120.4"/>
</dbReference>
<dbReference type="SMR" id="Q5KU39"/>
<dbReference type="BioGRID" id="229988">
    <property type="interactions" value="13"/>
</dbReference>
<dbReference type="FunCoup" id="Q5KU39">
    <property type="interactions" value="2343"/>
</dbReference>
<dbReference type="IntAct" id="Q5KU39">
    <property type="interactions" value="9"/>
</dbReference>
<dbReference type="STRING" id="10090.ENSMUSP00000072729"/>
<dbReference type="iPTMnet" id="Q5KU39"/>
<dbReference type="PhosphoSitePlus" id="Q5KU39"/>
<dbReference type="SwissPalm" id="Q5KU39"/>
<dbReference type="PaxDb" id="10090-ENSMUSP00000072729"/>
<dbReference type="PeptideAtlas" id="Q5KU39"/>
<dbReference type="ProteomicsDB" id="297816"/>
<dbReference type="Pumba" id="Q5KU39"/>
<dbReference type="Antibodypedia" id="13056">
    <property type="antibodies" value="125 antibodies from 30 providers"/>
</dbReference>
<dbReference type="DNASU" id="218035"/>
<dbReference type="Ensembl" id="ENSMUST00000072961.6">
    <property type="protein sequence ID" value="ENSMUSP00000072729.5"/>
    <property type="gene ID" value="ENSMUSG00000041236.9"/>
</dbReference>
<dbReference type="GeneID" id="218035"/>
<dbReference type="KEGG" id="mmu:218035"/>
<dbReference type="UCSC" id="uc007pok.2">
    <property type="organism name" value="mouse"/>
</dbReference>
<dbReference type="AGR" id="MGI:1929215"/>
<dbReference type="CTD" id="27072"/>
<dbReference type="MGI" id="MGI:1929215">
    <property type="gene designation" value="Vps41"/>
</dbReference>
<dbReference type="VEuPathDB" id="HostDB:ENSMUSG00000041236"/>
<dbReference type="eggNOG" id="KOG2066">
    <property type="taxonomic scope" value="Eukaryota"/>
</dbReference>
<dbReference type="GeneTree" id="ENSGT00390000000481"/>
<dbReference type="HOGENOM" id="CLU_001285_2_2_1"/>
<dbReference type="InParanoid" id="Q5KU39"/>
<dbReference type="OMA" id="PQLVWQD"/>
<dbReference type="OrthoDB" id="244107at2759"/>
<dbReference type="PhylomeDB" id="Q5KU39"/>
<dbReference type="TreeFam" id="TF300451"/>
<dbReference type="BioGRID-ORCS" id="218035">
    <property type="hits" value="25 hits in 79 CRISPR screens"/>
</dbReference>
<dbReference type="CD-CODE" id="CE726F99">
    <property type="entry name" value="Postsynaptic density"/>
</dbReference>
<dbReference type="ChiTaRS" id="Vps41">
    <property type="organism name" value="mouse"/>
</dbReference>
<dbReference type="PRO" id="PR:Q5KU39"/>
<dbReference type="Proteomes" id="UP000000589">
    <property type="component" value="Chromosome 13"/>
</dbReference>
<dbReference type="RNAct" id="Q5KU39">
    <property type="molecule type" value="protein"/>
</dbReference>
<dbReference type="Bgee" id="ENSMUSG00000041236">
    <property type="expression patterns" value="Expressed in rostral migratory stream and 269 other cell types or tissues"/>
</dbReference>
<dbReference type="GO" id="GO:0030123">
    <property type="term" value="C:AP-3 adaptor complex"/>
    <property type="evidence" value="ECO:0007669"/>
    <property type="project" value="Ensembl"/>
</dbReference>
<dbReference type="GO" id="GO:0071439">
    <property type="term" value="C:clathrin complex"/>
    <property type="evidence" value="ECO:0007669"/>
    <property type="project" value="Ensembl"/>
</dbReference>
<dbReference type="GO" id="GO:0030136">
    <property type="term" value="C:clathrin-coated vesicle"/>
    <property type="evidence" value="ECO:0007669"/>
    <property type="project" value="UniProtKB-SubCell"/>
</dbReference>
<dbReference type="GO" id="GO:0005829">
    <property type="term" value="C:cytosol"/>
    <property type="evidence" value="ECO:0007669"/>
    <property type="project" value="UniProtKB-SubCell"/>
</dbReference>
<dbReference type="GO" id="GO:0005769">
    <property type="term" value="C:early endosome"/>
    <property type="evidence" value="ECO:0000314"/>
    <property type="project" value="MGI"/>
</dbReference>
<dbReference type="GO" id="GO:0031901">
    <property type="term" value="C:early endosome membrane"/>
    <property type="evidence" value="ECO:0007669"/>
    <property type="project" value="UniProtKB-SubCell"/>
</dbReference>
<dbReference type="GO" id="GO:0005794">
    <property type="term" value="C:Golgi apparatus"/>
    <property type="evidence" value="ECO:0007669"/>
    <property type="project" value="UniProtKB-SubCell"/>
</dbReference>
<dbReference type="GO" id="GO:0030897">
    <property type="term" value="C:HOPS complex"/>
    <property type="evidence" value="ECO:0000353"/>
    <property type="project" value="UniProtKB"/>
</dbReference>
<dbReference type="GO" id="GO:0005770">
    <property type="term" value="C:late endosome"/>
    <property type="evidence" value="ECO:0000314"/>
    <property type="project" value="MGI"/>
</dbReference>
<dbReference type="GO" id="GO:0031902">
    <property type="term" value="C:late endosome membrane"/>
    <property type="evidence" value="ECO:0000314"/>
    <property type="project" value="UniProtKB"/>
</dbReference>
<dbReference type="GO" id="GO:1902501">
    <property type="term" value="C:lysosomal HOPS complex"/>
    <property type="evidence" value="ECO:0000250"/>
    <property type="project" value="UniProtKB"/>
</dbReference>
<dbReference type="GO" id="GO:0005764">
    <property type="term" value="C:lysosome"/>
    <property type="evidence" value="ECO:0000250"/>
    <property type="project" value="UniProtKB"/>
</dbReference>
<dbReference type="GO" id="GO:0015630">
    <property type="term" value="C:microtubule cytoskeleton"/>
    <property type="evidence" value="ECO:0000314"/>
    <property type="project" value="MGI"/>
</dbReference>
<dbReference type="GO" id="GO:0042802">
    <property type="term" value="F:identical protein binding"/>
    <property type="evidence" value="ECO:0007669"/>
    <property type="project" value="Ensembl"/>
</dbReference>
<dbReference type="GO" id="GO:0008017">
    <property type="term" value="F:microtubule binding"/>
    <property type="evidence" value="ECO:0000314"/>
    <property type="project" value="MGI"/>
</dbReference>
<dbReference type="GO" id="GO:0008270">
    <property type="term" value="F:zinc ion binding"/>
    <property type="evidence" value="ECO:0007669"/>
    <property type="project" value="UniProtKB-KW"/>
</dbReference>
<dbReference type="GO" id="GO:0006914">
    <property type="term" value="P:autophagy"/>
    <property type="evidence" value="ECO:0007669"/>
    <property type="project" value="UniProtKB-KW"/>
</dbReference>
<dbReference type="GO" id="GO:0034058">
    <property type="term" value="P:endosomal vesicle fusion"/>
    <property type="evidence" value="ECO:0007669"/>
    <property type="project" value="Ensembl"/>
</dbReference>
<dbReference type="GO" id="GO:0008333">
    <property type="term" value="P:endosome to lysosome transport"/>
    <property type="evidence" value="ECO:0007669"/>
    <property type="project" value="Ensembl"/>
</dbReference>
<dbReference type="GO" id="GO:1902774">
    <property type="term" value="P:late endosome to lysosome transport"/>
    <property type="evidence" value="ECO:0007669"/>
    <property type="project" value="Ensembl"/>
</dbReference>
<dbReference type="GO" id="GO:0006623">
    <property type="term" value="P:protein targeting to vacuole"/>
    <property type="evidence" value="ECO:0007669"/>
    <property type="project" value="InterPro"/>
</dbReference>
<dbReference type="GO" id="GO:0016192">
    <property type="term" value="P:vesicle-mediated transport"/>
    <property type="evidence" value="ECO:0000250"/>
    <property type="project" value="UniProtKB"/>
</dbReference>
<dbReference type="CDD" id="cd16690">
    <property type="entry name" value="RING-H2_Vps41"/>
    <property type="match status" value="1"/>
</dbReference>
<dbReference type="FunFam" id="1.25.40.10:FF:000247">
    <property type="entry name" value="Vacuolar protein sorting-associated protein 41 homolog"/>
    <property type="match status" value="1"/>
</dbReference>
<dbReference type="FunFam" id="2.130.10.10:FF:000107">
    <property type="entry name" value="Vacuolar protein sorting-associated protein 41 homolog"/>
    <property type="match status" value="1"/>
</dbReference>
<dbReference type="Gene3D" id="1.25.40.10">
    <property type="entry name" value="Tetratricopeptide repeat domain"/>
    <property type="match status" value="1"/>
</dbReference>
<dbReference type="Gene3D" id="2.130.10.10">
    <property type="entry name" value="YVTN repeat-like/Quinoprotein amine dehydrogenase"/>
    <property type="match status" value="1"/>
</dbReference>
<dbReference type="InterPro" id="IPR000547">
    <property type="entry name" value="Clathrin_H-chain/VPS_repeat"/>
</dbReference>
<dbReference type="InterPro" id="IPR011990">
    <property type="entry name" value="TPR-like_helical_dom_sf"/>
</dbReference>
<dbReference type="InterPro" id="IPR016902">
    <property type="entry name" value="VPS41"/>
</dbReference>
<dbReference type="InterPro" id="IPR045111">
    <property type="entry name" value="Vps41/Vps8"/>
</dbReference>
<dbReference type="InterPro" id="IPR015943">
    <property type="entry name" value="WD40/YVTN_repeat-like_dom_sf"/>
</dbReference>
<dbReference type="InterPro" id="IPR036322">
    <property type="entry name" value="WD40_repeat_dom_sf"/>
</dbReference>
<dbReference type="InterPro" id="IPR001841">
    <property type="entry name" value="Znf_RING"/>
</dbReference>
<dbReference type="PANTHER" id="PTHR12616">
    <property type="entry name" value="VACUOLAR PROTEIN SORTING VPS41"/>
    <property type="match status" value="1"/>
</dbReference>
<dbReference type="PANTHER" id="PTHR12616:SF1">
    <property type="entry name" value="VACUOLAR PROTEIN SORTING-ASSOCIATED PROTEIN 41 HOMOLOG"/>
    <property type="match status" value="1"/>
</dbReference>
<dbReference type="Pfam" id="PF23411">
    <property type="entry name" value="Beta-prop_Vps41"/>
    <property type="match status" value="1"/>
</dbReference>
<dbReference type="Pfam" id="PF23556">
    <property type="entry name" value="TPR_Vps41"/>
    <property type="match status" value="1"/>
</dbReference>
<dbReference type="Pfam" id="PF23555">
    <property type="entry name" value="zf-RING_Vps41"/>
    <property type="match status" value="1"/>
</dbReference>
<dbReference type="PIRSF" id="PIRSF028921">
    <property type="entry name" value="VPS41"/>
    <property type="match status" value="1"/>
</dbReference>
<dbReference type="SMART" id="SM00299">
    <property type="entry name" value="CLH"/>
    <property type="match status" value="1"/>
</dbReference>
<dbReference type="SUPFAM" id="SSF57850">
    <property type="entry name" value="RING/U-box"/>
    <property type="match status" value="1"/>
</dbReference>
<dbReference type="SUPFAM" id="SSF50978">
    <property type="entry name" value="WD40 repeat-like"/>
    <property type="match status" value="1"/>
</dbReference>
<dbReference type="PROSITE" id="PS50236">
    <property type="entry name" value="CHCR"/>
    <property type="match status" value="1"/>
</dbReference>
<dbReference type="PROSITE" id="PS50089">
    <property type="entry name" value="ZF_RING_2"/>
    <property type="match status" value="1"/>
</dbReference>
<keyword id="KW-0072">Autophagy</keyword>
<keyword id="KW-0963">Cytoplasm</keyword>
<keyword id="KW-0968">Cytoplasmic vesicle</keyword>
<keyword id="KW-0967">Endosome</keyword>
<keyword id="KW-0333">Golgi apparatus</keyword>
<keyword id="KW-0458">Lysosome</keyword>
<keyword id="KW-0472">Membrane</keyword>
<keyword id="KW-0479">Metal-binding</keyword>
<keyword id="KW-0653">Protein transport</keyword>
<keyword id="KW-1185">Reference proteome</keyword>
<keyword id="KW-0813">Transport</keyword>
<keyword id="KW-0862">Zinc</keyword>
<keyword id="KW-0863">Zinc-finger</keyword>
<name>VPS41_MOUSE</name>
<gene>
    <name type="primary">Vps41</name>
</gene>
<accession>Q5KU39</accession>
<accession>Q05AE9</accession>
<accession>Q3TPS1</accession>
<accession>Q80V99</accession>
<accession>Q8BKK6</accession>
<accession>Q8CG01</accession>
<accession>Q8CJC3</accession>
<sequence>MAEAEEQETESLEESTDESEEESEEEPKLKYERLSNGVTEILQKDAASCMTVHDKFLALGTHYGKVYLLDVQGNITQKFDVSPVKINQISLDDSGEHMGVCSEDGKLQVFGLYSGEEFHETFDCPIKIIAVHPQFVRSSCKQFVTGGKKLLLFERTWMNRWKSSVLHEGEGNIRSVKWRGHLIAWANNMGVKVFDITSKQRISNVPRDDISLRPDMYPCSLCWKDNVTLIIGWGTSIKICSVKERHASEMRDLPSRYVEIVSQFETEFYISGLAPLCDQLVVLSYVKEVSEKTEREYCARPRLDIIQPLPETCEEISSDALTVRGFQENECRDYHLEYSEGESLFYVVSPRDVVVAKERDQDDHIDWLLEKKKYEEALMAAEISQRNIKRHKILDIGLAYVNHLVERGEYDMAARKCQKILGKNASLWEYEVYKFKEIGQLKAISPYLPRGDPVLKPLIYEMILHEFLESDYEGFATLIREWPGDLYNNSVIVQAVRDHLKKDSQNKTLLKTLAELYTYDKNYGNALEIYLTLRHKDVFQLIHKHNLFSSIKDKIVLLMDFDSEKAVDMLLDNEDKISIKKVVEELEDRPELQHVYLHKLFKRDHHKGQRYHEKQISLYAEYDRPNLLPFLRDSTHCPLEKALEICQQRNFVEETVYLLSRMGNSRSALKMIMEELHDVDKAIEFAKEQDDGELWEDLILYSIDKPPFITGLLNNIGTHVDPILLIHRIKEGMEIPNLRDSLVKILQDYNLQILLREGCKKILVADSLSLLKKMHRTQMKGVLVDEENICESCLSPILPTDAAKPFSVVVFHCRHMFHKECLPMPSMNAPAQYCNICSAKNRGPGSAILEMKK</sequence>
<reference key="1">
    <citation type="submission" date="1999-06" db="EMBL/GenBank/DDBJ databases">
        <title>Mouse cDNA for yeast Vam2p Homologue (mVAM2).</title>
        <authorList>
            <person name="Wakabayashi T."/>
            <person name="Nakamura N."/>
            <person name="Wada Y."/>
            <person name="Futai M."/>
        </authorList>
    </citation>
    <scope>NUCLEOTIDE SEQUENCE [MRNA]</scope>
    <source>
        <strain>C57BL/6J</strain>
    </source>
</reference>
<reference key="2">
    <citation type="submission" date="2000-12" db="EMBL/GenBank/DDBJ databases">
        <title>A mouse homolog of yeast VPS41.</title>
        <authorList>
            <person name="Dell'Angelica E.C."/>
            <person name="Peters L.L."/>
        </authorList>
    </citation>
    <scope>NUCLEOTIDE SEQUENCE [MRNA]</scope>
    <source>
        <strain>C3H/HeJ</strain>
        <tissue>Liver</tissue>
    </source>
</reference>
<reference key="3">
    <citation type="journal article" date="2005" name="Science">
        <title>The transcriptional landscape of the mammalian genome.</title>
        <authorList>
            <person name="Carninci P."/>
            <person name="Kasukawa T."/>
            <person name="Katayama S."/>
            <person name="Gough J."/>
            <person name="Frith M.C."/>
            <person name="Maeda N."/>
            <person name="Oyama R."/>
            <person name="Ravasi T."/>
            <person name="Lenhard B."/>
            <person name="Wells C."/>
            <person name="Kodzius R."/>
            <person name="Shimokawa K."/>
            <person name="Bajic V.B."/>
            <person name="Brenner S.E."/>
            <person name="Batalov S."/>
            <person name="Forrest A.R."/>
            <person name="Zavolan M."/>
            <person name="Davis M.J."/>
            <person name="Wilming L.G."/>
            <person name="Aidinis V."/>
            <person name="Allen J.E."/>
            <person name="Ambesi-Impiombato A."/>
            <person name="Apweiler R."/>
            <person name="Aturaliya R.N."/>
            <person name="Bailey T.L."/>
            <person name="Bansal M."/>
            <person name="Baxter L."/>
            <person name="Beisel K.W."/>
            <person name="Bersano T."/>
            <person name="Bono H."/>
            <person name="Chalk A.M."/>
            <person name="Chiu K.P."/>
            <person name="Choudhary V."/>
            <person name="Christoffels A."/>
            <person name="Clutterbuck D.R."/>
            <person name="Crowe M.L."/>
            <person name="Dalla E."/>
            <person name="Dalrymple B.P."/>
            <person name="de Bono B."/>
            <person name="Della Gatta G."/>
            <person name="di Bernardo D."/>
            <person name="Down T."/>
            <person name="Engstrom P."/>
            <person name="Fagiolini M."/>
            <person name="Faulkner G."/>
            <person name="Fletcher C.F."/>
            <person name="Fukushima T."/>
            <person name="Furuno M."/>
            <person name="Futaki S."/>
            <person name="Gariboldi M."/>
            <person name="Georgii-Hemming P."/>
            <person name="Gingeras T.R."/>
            <person name="Gojobori T."/>
            <person name="Green R.E."/>
            <person name="Gustincich S."/>
            <person name="Harbers M."/>
            <person name="Hayashi Y."/>
            <person name="Hensch T.K."/>
            <person name="Hirokawa N."/>
            <person name="Hill D."/>
            <person name="Huminiecki L."/>
            <person name="Iacono M."/>
            <person name="Ikeo K."/>
            <person name="Iwama A."/>
            <person name="Ishikawa T."/>
            <person name="Jakt M."/>
            <person name="Kanapin A."/>
            <person name="Katoh M."/>
            <person name="Kawasawa Y."/>
            <person name="Kelso J."/>
            <person name="Kitamura H."/>
            <person name="Kitano H."/>
            <person name="Kollias G."/>
            <person name="Krishnan S.P."/>
            <person name="Kruger A."/>
            <person name="Kummerfeld S.K."/>
            <person name="Kurochkin I.V."/>
            <person name="Lareau L.F."/>
            <person name="Lazarevic D."/>
            <person name="Lipovich L."/>
            <person name="Liu J."/>
            <person name="Liuni S."/>
            <person name="McWilliam S."/>
            <person name="Madan Babu M."/>
            <person name="Madera M."/>
            <person name="Marchionni L."/>
            <person name="Matsuda H."/>
            <person name="Matsuzawa S."/>
            <person name="Miki H."/>
            <person name="Mignone F."/>
            <person name="Miyake S."/>
            <person name="Morris K."/>
            <person name="Mottagui-Tabar S."/>
            <person name="Mulder N."/>
            <person name="Nakano N."/>
            <person name="Nakauchi H."/>
            <person name="Ng P."/>
            <person name="Nilsson R."/>
            <person name="Nishiguchi S."/>
            <person name="Nishikawa S."/>
            <person name="Nori F."/>
            <person name="Ohara O."/>
            <person name="Okazaki Y."/>
            <person name="Orlando V."/>
            <person name="Pang K.C."/>
            <person name="Pavan W.J."/>
            <person name="Pavesi G."/>
            <person name="Pesole G."/>
            <person name="Petrovsky N."/>
            <person name="Piazza S."/>
            <person name="Reed J."/>
            <person name="Reid J.F."/>
            <person name="Ring B.Z."/>
            <person name="Ringwald M."/>
            <person name="Rost B."/>
            <person name="Ruan Y."/>
            <person name="Salzberg S.L."/>
            <person name="Sandelin A."/>
            <person name="Schneider C."/>
            <person name="Schoenbach C."/>
            <person name="Sekiguchi K."/>
            <person name="Semple C.A."/>
            <person name="Seno S."/>
            <person name="Sessa L."/>
            <person name="Sheng Y."/>
            <person name="Shibata Y."/>
            <person name="Shimada H."/>
            <person name="Shimada K."/>
            <person name="Silva D."/>
            <person name="Sinclair B."/>
            <person name="Sperling S."/>
            <person name="Stupka E."/>
            <person name="Sugiura K."/>
            <person name="Sultana R."/>
            <person name="Takenaka Y."/>
            <person name="Taki K."/>
            <person name="Tammoja K."/>
            <person name="Tan S.L."/>
            <person name="Tang S."/>
            <person name="Taylor M.S."/>
            <person name="Tegner J."/>
            <person name="Teichmann S.A."/>
            <person name="Ueda H.R."/>
            <person name="van Nimwegen E."/>
            <person name="Verardo R."/>
            <person name="Wei C.L."/>
            <person name="Yagi K."/>
            <person name="Yamanishi H."/>
            <person name="Zabarovsky E."/>
            <person name="Zhu S."/>
            <person name="Zimmer A."/>
            <person name="Hide W."/>
            <person name="Bult C."/>
            <person name="Grimmond S.M."/>
            <person name="Teasdale R.D."/>
            <person name="Liu E.T."/>
            <person name="Brusic V."/>
            <person name="Quackenbush J."/>
            <person name="Wahlestedt C."/>
            <person name="Mattick J.S."/>
            <person name="Hume D.A."/>
            <person name="Kai C."/>
            <person name="Sasaki D."/>
            <person name="Tomaru Y."/>
            <person name="Fukuda S."/>
            <person name="Kanamori-Katayama M."/>
            <person name="Suzuki M."/>
            <person name="Aoki J."/>
            <person name="Arakawa T."/>
            <person name="Iida J."/>
            <person name="Imamura K."/>
            <person name="Itoh M."/>
            <person name="Kato T."/>
            <person name="Kawaji H."/>
            <person name="Kawagashira N."/>
            <person name="Kawashima T."/>
            <person name="Kojima M."/>
            <person name="Kondo S."/>
            <person name="Konno H."/>
            <person name="Nakano K."/>
            <person name="Ninomiya N."/>
            <person name="Nishio T."/>
            <person name="Okada M."/>
            <person name="Plessy C."/>
            <person name="Shibata K."/>
            <person name="Shiraki T."/>
            <person name="Suzuki S."/>
            <person name="Tagami M."/>
            <person name="Waki K."/>
            <person name="Watahiki A."/>
            <person name="Okamura-Oho Y."/>
            <person name="Suzuki H."/>
            <person name="Kawai J."/>
            <person name="Hayashizaki Y."/>
        </authorList>
    </citation>
    <scope>NUCLEOTIDE SEQUENCE [LARGE SCALE MRNA]</scope>
    <source>
        <strain>C57BL/6J</strain>
        <tissue>Hippocampus</tissue>
        <tissue>Spinal ganglion</tissue>
    </source>
</reference>
<reference key="4">
    <citation type="journal article" date="2004" name="Genome Res.">
        <title>The status, quality, and expansion of the NIH full-length cDNA project: the Mammalian Gene Collection (MGC).</title>
        <authorList>
            <consortium name="The MGC Project Team"/>
        </authorList>
    </citation>
    <scope>NUCLEOTIDE SEQUENCE [LARGE SCALE MRNA]</scope>
    <source>
        <strain>Czech II</strain>
        <strain>FVB/N</strain>
        <tissue>Brain</tissue>
        <tissue>Kidney</tissue>
        <tissue>Mammary tumor</tissue>
    </source>
</reference>
<reference key="5">
    <citation type="journal article" date="2010" name="Cell">
        <title>A tissue-specific atlas of mouse protein phosphorylation and expression.</title>
        <authorList>
            <person name="Huttlin E.L."/>
            <person name="Jedrychowski M.P."/>
            <person name="Elias J.E."/>
            <person name="Goswami T."/>
            <person name="Rad R."/>
            <person name="Beausoleil S.A."/>
            <person name="Villen J."/>
            <person name="Haas W."/>
            <person name="Sowa M.E."/>
            <person name="Gygi S.P."/>
        </authorList>
    </citation>
    <scope>IDENTIFICATION BY MASS SPECTROMETRY [LARGE SCALE ANALYSIS]</scope>
    <source>
        <tissue>Brown adipose tissue</tissue>
        <tissue>Kidney</tissue>
        <tissue>Lung</tissue>
        <tissue>Testis</tissue>
    </source>
</reference>
<reference key="6">
    <citation type="journal article" date="2017" name="Elife">
        <title>Genetic screen in Drosophila muscle identifies autophagy-mediated T-tubule remodeling and a Rab2 role in autophagy.</title>
        <authorList>
            <person name="Fujita N."/>
            <person name="Huang W."/>
            <person name="Lin T.H."/>
            <person name="Groulx J.F."/>
            <person name="Jean S."/>
            <person name="Nguyen J."/>
            <person name="Kuchitsu Y."/>
            <person name="Koyama-Honda I."/>
            <person name="Mizushima N."/>
            <person name="Fukuda M."/>
            <person name="Kiger A.A."/>
        </authorList>
    </citation>
    <scope>INTERACTION WITH RAB7; RAB2A AND RAB2B</scope>
</reference>
<comment type="function">
    <text evidence="1 2">Plays a role in vesicle-mediated protein trafficking to lysosomal compartments including the endocytic membrane transport and autophagic pathways. Believed to act in part as a core component of the putative HOPS endosomal tethering complex is proposed to be involved in the Rab5-to-Rab7 endosome conversion probably implicating MON1A/B, and via binding SNAREs and SNARE complexes to mediate tethering and docking events during SNARE-mediated membrane fusion. The HOPS complex is proposed to be recruited to Rab7 on the late endosomal membrane and to regulate late endocytic, phagocytic and autophagic traffic towards lysosomes. Involved in homotypic vesicle fusions between late endosomes and in heterotypic fusions between late endosomes and lysosomes implicated in degradation of endocytosed cargo. Required for fusion of autophagosomes with lysosomes. Links the HOPS complex to endosomal via its association with RILP and to lysosomal membranes via its association with ARL8B, suggesting that these interactions may bring the compartments to close proximity for fusion (By similarity). Involved in the direct trans-Golgi network to late endosomes transport of lysosomal membrane proteins independently of HOPS (By similarity). Involved in sorting to the regulated secretory pathway presumably implicating the AP-3 adapter complex (By similarity). May play a role in HOPS-independent function in the regulated secretory pathway (By similarity).</text>
</comment>
<comment type="subunit">
    <text evidence="2 5">Component of the putative homotypic fusion and vacuole protein sorting (HOPS) complex; the core of which composed of the class C Vps proteins VPS11, VPS16, VPS18 and VPS33A, is associated with VPS39 and VPS41. Interacts with RILP, MON1B. Interacts with ARL8B (GTP-bound form); involved in recruitment to lysosomes and probably hierarchial assembly of the HOPS complex at lysosomal membranes. In vitro can self-assemble into a lattice. Associates with adapter protein complex 3 (AP-3) and clathrin:AP-3 complexes. Interacts with STX17; this interaction is increased in the absence of TMEM39A. Interacts with ARL8B and PLEKHM1; the interaction mediates the recruitment of the HOPS complex to lysosomes. Interacts with RAB7, RAB2A and RAB2B (PubMed:28063257). Interacts with RAB39A (GTP-bound) and RAB39B (GTP-bound); interaction with RAB39A leads to a functional HOPS complex that mediates autophagosome-lysosome membrane tethering (By similarity).</text>
</comment>
<comment type="subcellular location">
    <subcellularLocation>
        <location evidence="2">Endosome membrane</location>
        <topology evidence="2">Peripheral membrane protein</topology>
    </subcellularLocation>
    <subcellularLocation>
        <location evidence="2">Late endosome membrane</location>
        <topology evidence="2">Peripheral membrane protein</topology>
    </subcellularLocation>
    <subcellularLocation>
        <location evidence="2">Early endosome membrane</location>
        <topology evidence="2">Peripheral membrane protein</topology>
    </subcellularLocation>
    <subcellularLocation>
        <location evidence="2">Lysosome membrane</location>
        <topology evidence="2">Peripheral membrane protein</topology>
    </subcellularLocation>
    <subcellularLocation>
        <location evidence="2">Golgi apparatus</location>
        <location evidence="2">trans-Golgi network</location>
    </subcellularLocation>
    <subcellularLocation>
        <location evidence="2">Cytoplasmic vesicle</location>
        <location evidence="2">Clathrin-coated vesicle</location>
    </subcellularLocation>
    <subcellularLocation>
        <location evidence="2">Cytoplasm</location>
        <location evidence="2">Cytosol</location>
    </subcellularLocation>
</comment>
<comment type="similarity">
    <text evidence="6">Belongs to the VPS41 family.</text>
</comment>
<organism>
    <name type="scientific">Mus musculus</name>
    <name type="common">Mouse</name>
    <dbReference type="NCBI Taxonomy" id="10090"/>
    <lineage>
        <taxon>Eukaryota</taxon>
        <taxon>Metazoa</taxon>
        <taxon>Chordata</taxon>
        <taxon>Craniata</taxon>
        <taxon>Vertebrata</taxon>
        <taxon>Euteleostomi</taxon>
        <taxon>Mammalia</taxon>
        <taxon>Eutheria</taxon>
        <taxon>Euarchontoglires</taxon>
        <taxon>Glires</taxon>
        <taxon>Rodentia</taxon>
        <taxon>Myomorpha</taxon>
        <taxon>Muroidea</taxon>
        <taxon>Muridae</taxon>
        <taxon>Murinae</taxon>
        <taxon>Mus</taxon>
        <taxon>Mus</taxon>
    </lineage>
</organism>
<evidence type="ECO:0000250" key="1">
    <source>
        <dbReference type="UniProtKB" id="D3ZVH6"/>
    </source>
</evidence>
<evidence type="ECO:0000250" key="2">
    <source>
        <dbReference type="UniProtKB" id="P49754"/>
    </source>
</evidence>
<evidence type="ECO:0000255" key="3">
    <source>
        <dbReference type="PROSITE-ProRule" id="PRU00175"/>
    </source>
</evidence>
<evidence type="ECO:0000256" key="4">
    <source>
        <dbReference type="SAM" id="MobiDB-lite"/>
    </source>
</evidence>
<evidence type="ECO:0000269" key="5">
    <source>
    </source>
</evidence>
<evidence type="ECO:0000305" key="6"/>
<feature type="chain" id="PRO_0000253020" description="Vacuolar protein sorting-associated protein 41 homolog">
    <location>
        <begin position="1"/>
        <end position="853"/>
    </location>
</feature>
<feature type="repeat" description="CHCR">
    <location>
        <begin position="567"/>
        <end position="711"/>
    </location>
</feature>
<feature type="zinc finger region" description="RING-type; atypical" evidence="3">
    <location>
        <begin position="790"/>
        <end position="838"/>
    </location>
</feature>
<feature type="region of interest" description="Interaction with ARL8B" evidence="2">
    <location>
        <begin position="1"/>
        <end position="539"/>
    </location>
</feature>
<feature type="region of interest" description="Disordered" evidence="4">
    <location>
        <begin position="1"/>
        <end position="32"/>
    </location>
</feature>
<feature type="compositionally biased region" description="Acidic residues" evidence="4">
    <location>
        <begin position="1"/>
        <end position="25"/>
    </location>
</feature>
<feature type="sequence conflict" description="In Ref. 3; BAE37664." evidence="6" ref="3">
    <original>T</original>
    <variation>K</variation>
    <location>
        <position position="16"/>
    </location>
</feature>
<feature type="sequence conflict" description="In Ref. 3; BAC34707." evidence="6" ref="3">
    <original>G</original>
    <variation>C</variation>
    <location>
        <position position="190"/>
    </location>
</feature>
<feature type="sequence conflict" description="In Ref. 2; AAN73032." evidence="6" ref="2">
    <original>V</original>
    <variation>L</variation>
    <location>
        <position position="401"/>
    </location>
</feature>
<feature type="sequence conflict" description="In Ref. 2; AAN73032." evidence="6" ref="2">
    <original>LW</original>
    <variation>HR</variation>
    <location>
        <begin position="427"/>
        <end position="428"/>
    </location>
</feature>
<proteinExistence type="evidence at protein level"/>
<protein>
    <recommendedName>
        <fullName>Vacuolar protein sorting-associated protein 41 homolog</fullName>
    </recommendedName>
    <alternativeName>
        <fullName>VAM2 homolog</fullName>
        <shortName>mVAM2</shortName>
    </alternativeName>
</protein>